<dbReference type="EMBL" id="AL123456">
    <property type="protein sequence ID" value="CCP46110.1"/>
    <property type="molecule type" value="Genomic_DNA"/>
</dbReference>
<dbReference type="RefSeq" id="NP_217808.1">
    <property type="nucleotide sequence ID" value="NC_000962.3"/>
</dbReference>
<dbReference type="RefSeq" id="WP_003417179.1">
    <property type="nucleotide sequence ID" value="NZ_NVQJ01000003.1"/>
</dbReference>
<dbReference type="PDB" id="2IVM">
    <property type="method" value="X-ray"/>
    <property type="resolution" value="2.50 A"/>
    <property type="chains" value="A/B=1-150"/>
</dbReference>
<dbReference type="PDB" id="2QZ8">
    <property type="method" value="X-ray"/>
    <property type="resolution" value="2.16 A"/>
    <property type="chains" value="A/B/C/D=5-150"/>
</dbReference>
<dbReference type="PDB" id="2VBW">
    <property type="method" value="X-ray"/>
    <property type="resolution" value="2.20 A"/>
    <property type="chains" value="A/B=1-150"/>
</dbReference>
<dbReference type="PDB" id="2VBX">
    <property type="method" value="X-ray"/>
    <property type="resolution" value="2.75 A"/>
    <property type="chains" value="A/B=1-150"/>
</dbReference>
<dbReference type="PDB" id="2VBY">
    <property type="method" value="X-ray"/>
    <property type="resolution" value="2.80 A"/>
    <property type="chains" value="A/B=1-150"/>
</dbReference>
<dbReference type="PDB" id="2VBZ">
    <property type="method" value="X-ray"/>
    <property type="resolution" value="2.80 A"/>
    <property type="chains" value="A/B=1-150"/>
</dbReference>
<dbReference type="PDB" id="2VC0">
    <property type="method" value="X-ray"/>
    <property type="resolution" value="2.50 A"/>
    <property type="chains" value="A/B=1-150"/>
</dbReference>
<dbReference type="PDB" id="2VC1">
    <property type="method" value="X-ray"/>
    <property type="resolution" value="2.75 A"/>
    <property type="chains" value="A/B=1-150"/>
</dbReference>
<dbReference type="PDB" id="2W24">
    <property type="method" value="X-ray"/>
    <property type="resolution" value="2.50 A"/>
    <property type="chains" value="A/B=1-150"/>
</dbReference>
<dbReference type="PDB" id="2W25">
    <property type="method" value="X-ray"/>
    <property type="resolution" value="2.15 A"/>
    <property type="chains" value="A/B=1-150"/>
</dbReference>
<dbReference type="PDB" id="2W29">
    <property type="method" value="X-ray"/>
    <property type="resolution" value="4.10 A"/>
    <property type="chains" value="A/B/C/D=1-150"/>
</dbReference>
<dbReference type="PDBsum" id="2IVM"/>
<dbReference type="PDBsum" id="2QZ8"/>
<dbReference type="PDBsum" id="2VBW"/>
<dbReference type="PDBsum" id="2VBX"/>
<dbReference type="PDBsum" id="2VBY"/>
<dbReference type="PDBsum" id="2VBZ"/>
<dbReference type="PDBsum" id="2VC0"/>
<dbReference type="PDBsum" id="2VC1"/>
<dbReference type="PDBsum" id="2W24"/>
<dbReference type="PDBsum" id="2W25"/>
<dbReference type="PDBsum" id="2W29"/>
<dbReference type="SMR" id="I6YBQ3"/>
<dbReference type="STRING" id="83332.Rv3291c"/>
<dbReference type="PaxDb" id="83332-Rv3291c"/>
<dbReference type="DNASU" id="888728"/>
<dbReference type="GeneID" id="45427287"/>
<dbReference type="GeneID" id="888728"/>
<dbReference type="KEGG" id="mtu:Rv3291c"/>
<dbReference type="KEGG" id="mtv:RVBD_3291c"/>
<dbReference type="PATRIC" id="fig|83332.111.peg.3673"/>
<dbReference type="TubercuList" id="Rv3291c"/>
<dbReference type="eggNOG" id="COG1522">
    <property type="taxonomic scope" value="Bacteria"/>
</dbReference>
<dbReference type="InParanoid" id="I6YBQ3"/>
<dbReference type="OrthoDB" id="5243753at2"/>
<dbReference type="PhylomeDB" id="I6YBQ3"/>
<dbReference type="Proteomes" id="UP000001584">
    <property type="component" value="Chromosome"/>
</dbReference>
<dbReference type="GO" id="GO:0005829">
    <property type="term" value="C:cytosol"/>
    <property type="evidence" value="ECO:0000318"/>
    <property type="project" value="GO_Central"/>
</dbReference>
<dbReference type="GO" id="GO:0043565">
    <property type="term" value="F:sequence-specific DNA binding"/>
    <property type="evidence" value="ECO:0000318"/>
    <property type="project" value="GO_Central"/>
</dbReference>
<dbReference type="GO" id="GO:0043200">
    <property type="term" value="P:response to amino acid"/>
    <property type="evidence" value="ECO:0000318"/>
    <property type="project" value="GO_Central"/>
</dbReference>
<dbReference type="FunFam" id="3.30.70.920:FF:000003">
    <property type="entry name" value="AsnC family transcriptional regulator"/>
    <property type="match status" value="1"/>
</dbReference>
<dbReference type="Gene3D" id="3.30.70.920">
    <property type="match status" value="1"/>
</dbReference>
<dbReference type="Gene3D" id="1.10.10.10">
    <property type="entry name" value="Winged helix-like DNA-binding domain superfamily/Winged helix DNA-binding domain"/>
    <property type="match status" value="1"/>
</dbReference>
<dbReference type="InterPro" id="IPR000485">
    <property type="entry name" value="AsnC-type_HTH_dom"/>
</dbReference>
<dbReference type="InterPro" id="IPR011008">
    <property type="entry name" value="Dimeric_a/b-barrel"/>
</dbReference>
<dbReference type="InterPro" id="IPR019888">
    <property type="entry name" value="Tscrpt_reg_AsnC-like"/>
</dbReference>
<dbReference type="InterPro" id="IPR019887">
    <property type="entry name" value="Tscrpt_reg_AsnC/Lrp_C"/>
</dbReference>
<dbReference type="InterPro" id="IPR036388">
    <property type="entry name" value="WH-like_DNA-bd_sf"/>
</dbReference>
<dbReference type="InterPro" id="IPR036390">
    <property type="entry name" value="WH_DNA-bd_sf"/>
</dbReference>
<dbReference type="PANTHER" id="PTHR30154:SF53">
    <property type="entry name" value="HTH-TYPE TRANSCRIPTIONAL REGULATOR LRPC"/>
    <property type="match status" value="1"/>
</dbReference>
<dbReference type="PANTHER" id="PTHR30154">
    <property type="entry name" value="LEUCINE-RESPONSIVE REGULATORY PROTEIN"/>
    <property type="match status" value="1"/>
</dbReference>
<dbReference type="Pfam" id="PF01037">
    <property type="entry name" value="AsnC_trans_reg"/>
    <property type="match status" value="1"/>
</dbReference>
<dbReference type="Pfam" id="PF13412">
    <property type="entry name" value="HTH_24"/>
    <property type="match status" value="1"/>
</dbReference>
<dbReference type="PRINTS" id="PR00033">
    <property type="entry name" value="HTHASNC"/>
</dbReference>
<dbReference type="SMART" id="SM00344">
    <property type="entry name" value="HTH_ASNC"/>
    <property type="match status" value="1"/>
</dbReference>
<dbReference type="SUPFAM" id="SSF54909">
    <property type="entry name" value="Dimeric alpha+beta barrel"/>
    <property type="match status" value="1"/>
</dbReference>
<dbReference type="SUPFAM" id="SSF46785">
    <property type="entry name" value="Winged helix' DNA-binding domain"/>
    <property type="match status" value="1"/>
</dbReference>
<dbReference type="PROSITE" id="PS50956">
    <property type="entry name" value="HTH_ASNC_2"/>
    <property type="match status" value="1"/>
</dbReference>
<name>LRPA_MYCTU</name>
<feature type="chain" id="PRO_0000461824" description="HTH-type transcriptional regulator LrpA">
    <location>
        <begin position="1"/>
        <end position="150"/>
    </location>
</feature>
<feature type="domain" description="HTH asnC-type" evidence="1">
    <location>
        <begin position="5"/>
        <end position="66"/>
    </location>
</feature>
<feature type="DNA-binding region" description="H-T-H motif" evidence="1">
    <location>
        <begin position="24"/>
        <end position="43"/>
    </location>
</feature>
<feature type="binding site" evidence="4 16">
    <location>
        <position position="100"/>
    </location>
    <ligand>
        <name>L-phenylalanine</name>
        <dbReference type="ChEBI" id="CHEBI:58095"/>
    </ligand>
</feature>
<feature type="binding site" evidence="4 16">
    <location>
        <position position="102"/>
    </location>
    <ligand>
        <name>L-phenylalanine</name>
        <dbReference type="ChEBI" id="CHEBI:58095"/>
    </ligand>
</feature>
<feature type="binding site" evidence="4 16">
    <location>
        <position position="104"/>
    </location>
    <ligand>
        <name>L-phenylalanine</name>
        <dbReference type="ChEBI" id="CHEBI:58095"/>
    </ligand>
</feature>
<feature type="mutagenesis site" description="Adopts an unusual open quaternary structure." evidence="7">
    <original>G</original>
    <variation>T</variation>
    <location>
        <position position="102"/>
    </location>
</feature>
<feature type="mutagenesis site" description="Retains the closed quaternary association observed in the native protein. Loses the ability to bind Phe and His." evidence="7">
    <original>E</original>
    <variation>A</variation>
    <location>
        <position position="104"/>
    </location>
</feature>
<feature type="helix" evidence="25">
    <location>
        <begin position="7"/>
        <end position="18"/>
    </location>
</feature>
<feature type="helix" evidence="25">
    <location>
        <begin position="24"/>
        <end position="31"/>
    </location>
</feature>
<feature type="helix" evidence="25">
    <location>
        <begin position="35"/>
        <end position="47"/>
    </location>
</feature>
<feature type="strand" evidence="25">
    <location>
        <begin position="50"/>
        <end position="58"/>
    </location>
</feature>
<feature type="helix" evidence="25">
    <location>
        <begin position="61"/>
        <end position="63"/>
    </location>
</feature>
<feature type="strand" evidence="25">
    <location>
        <begin position="67"/>
        <end position="76"/>
    </location>
</feature>
<feature type="helix" evidence="25">
    <location>
        <begin position="84"/>
        <end position="88"/>
    </location>
</feature>
<feature type="strand" evidence="25">
    <location>
        <begin position="94"/>
        <end position="103"/>
    </location>
</feature>
<feature type="strand" evidence="25">
    <location>
        <begin position="105"/>
        <end position="114"/>
    </location>
</feature>
<feature type="helix" evidence="25">
    <location>
        <begin position="115"/>
        <end position="129"/>
    </location>
</feature>
<feature type="strand" evidence="25">
    <location>
        <begin position="131"/>
        <end position="143"/>
    </location>
</feature>
<sequence>MNEALDDIDRILVRELAADGRATLSELATRAGLSVSAVQSRVRRLESRGVVQGYSARINPEAVGHLLSAFVAITPLDPSQPDDAPARLEHIEEVESCYSVAGEESYVLLVRVASARALEDLLQRIRTTANVRTRSTIILNTFYSDRQHIP</sequence>
<proteinExistence type="evidence at protein level"/>
<reference key="1">
    <citation type="journal article" date="1998" name="Nature">
        <title>Deciphering the biology of Mycobacterium tuberculosis from the complete genome sequence.</title>
        <authorList>
            <person name="Cole S.T."/>
            <person name="Brosch R."/>
            <person name="Parkhill J."/>
            <person name="Garnier T."/>
            <person name="Churcher C.M."/>
            <person name="Harris D.E."/>
            <person name="Gordon S.V."/>
            <person name="Eiglmeier K."/>
            <person name="Gas S."/>
            <person name="Barry C.E. III"/>
            <person name="Tekaia F."/>
            <person name="Badcock K."/>
            <person name="Basham D."/>
            <person name="Brown D."/>
            <person name="Chillingworth T."/>
            <person name="Connor R."/>
            <person name="Davies R.M."/>
            <person name="Devlin K."/>
            <person name="Feltwell T."/>
            <person name="Gentles S."/>
            <person name="Hamlin N."/>
            <person name="Holroyd S."/>
            <person name="Hornsby T."/>
            <person name="Jagels K."/>
            <person name="Krogh A."/>
            <person name="McLean J."/>
            <person name="Moule S."/>
            <person name="Murphy L.D."/>
            <person name="Oliver S."/>
            <person name="Osborne J."/>
            <person name="Quail M.A."/>
            <person name="Rajandream M.A."/>
            <person name="Rogers J."/>
            <person name="Rutter S."/>
            <person name="Seeger K."/>
            <person name="Skelton S."/>
            <person name="Squares S."/>
            <person name="Squares R."/>
            <person name="Sulston J.E."/>
            <person name="Taylor K."/>
            <person name="Whitehead S."/>
            <person name="Barrell B.G."/>
        </authorList>
    </citation>
    <scope>NUCLEOTIDE SEQUENCE [LARGE SCALE GENOMIC DNA]</scope>
    <source>
        <strain>ATCC 25618 / H37Rv</strain>
    </source>
</reference>
<reference key="2">
    <citation type="journal article" date="2002" name="Mol. Microbiol.">
        <title>Evaluation of a nutrient starvation model of Mycobacterium tuberculosis persistence by gene and protein expression profiling.</title>
        <authorList>
            <person name="Betts J.C."/>
            <person name="Lukey P.T."/>
            <person name="Robb L.C."/>
            <person name="McAdam R.A."/>
            <person name="Duncan K."/>
        </authorList>
    </citation>
    <scope>INDUCTION FOLLOWING STARVATION</scope>
    <source>
        <strain>ATCC 25618 / H37Rv / NCTC 7416</strain>
    </source>
</reference>
<reference key="3">
    <citation type="journal article" date="2004" name="Acta Crystallogr. D">
        <title>Cloning, expression, purification and crystallization of a transcriptional regulatory protein (Rv3291c) from Mycobacterium tuberculosis H37Rv.</title>
        <authorList>
            <person name="Shrivastava T."/>
            <person name="Kumar S."/>
            <person name="Ramachandran R."/>
        </authorList>
    </citation>
    <scope>SUBUNIT</scope>
    <scope>MASS SPECTROMETRY</scope>
    <scope>CRYSTALLIZATION</scope>
    <source>
        <strain>H37Rv</strain>
    </source>
</reference>
<reference key="4">
    <citation type="journal article" date="2008" name="Microb. Pathog.">
        <title>A transposon insertion mutant of Mycobacterium fortuitum attenuated in virulence and persistence in a murine infection model that is complemented by Rv3291c of Mycobacterium tuberculosis.</title>
        <authorList>
            <person name="Parti R.P."/>
            <person name="Shrivastava R."/>
            <person name="Srivastava S."/>
            <person name="Subramanian A.R."/>
            <person name="Roy R."/>
            <person name="Srivastava B.S."/>
            <person name="Srivastava R."/>
        </authorList>
    </citation>
    <scope>FUNCTION IN PERSISTENCE</scope>
</reference>
<reference key="5">
    <citation type="journal article" date="2011" name="Mol. Cell. Proteomics">
        <title>Proteogenomic analysis of Mycobacterium tuberculosis by high resolution mass spectrometry.</title>
        <authorList>
            <person name="Kelkar D.S."/>
            <person name="Kumar D."/>
            <person name="Kumar P."/>
            <person name="Balakrishnan L."/>
            <person name="Muthusamy B."/>
            <person name="Yadav A.K."/>
            <person name="Shrivastava P."/>
            <person name="Marimuthu A."/>
            <person name="Anand S."/>
            <person name="Sundaram H."/>
            <person name="Kingsbury R."/>
            <person name="Harsha H.C."/>
            <person name="Nair B."/>
            <person name="Prasad T.S."/>
            <person name="Chauhan D.S."/>
            <person name="Katoch K."/>
            <person name="Katoch V.M."/>
            <person name="Kumar P."/>
            <person name="Chaerkady R."/>
            <person name="Ramachandran S."/>
            <person name="Dash D."/>
            <person name="Pandey A."/>
        </authorList>
    </citation>
    <scope>IDENTIFICATION BY MASS SPECTROMETRY [LARGE SCALE ANALYSIS]</scope>
    <source>
        <strain>ATCC 25618 / H37Rv</strain>
    </source>
</reference>
<reference key="6">
    <citation type="journal article" date="2016" name="DNA Cell Biol.">
        <title>New Targets and Cofactors for the Transcription Factor LrpA from Mycobacterium tuberculosis.</title>
        <authorList>
            <person name="Song N."/>
            <person name="Cui Y."/>
            <person name="Li Z."/>
            <person name="Chen L."/>
            <person name="Liu S."/>
        </authorList>
    </citation>
    <scope>FUNCTION</scope>
    <scope>ACTIVITY REGULATION</scope>
    <source>
        <strain>H37Rv</strain>
    </source>
</reference>
<reference evidence="14 16 17 18 19 20 21" key="7">
    <citation type="journal article" date="2007" name="Nucleic Acids Res.">
        <title>Mechanistic insights from the crystal structures of a feast/famine regulatory protein from Mycobacterium tuberculosis H37Rv.</title>
        <authorList>
            <person name="Shrivastava T."/>
            <person name="Ramachandran R."/>
        </authorList>
    </citation>
    <scope>X-RAY CRYSTALLOGRAPHY (2.20 ANGSTROMS) OF APOPROTEIN AND IN COMPLEXES WITH HISTIDINE; LEUCINE; METHIONINE; PHENYLALANINE; TRYPTOPHAN AND TYROSINE</scope>
    <scope>ACTIVITY REGULATION</scope>
    <scope>SUBUNIT</scope>
    <scope>DOMAIN</scope>
    <source>
        <strain>H37Rv</strain>
    </source>
</reference>
<reference evidence="15" key="8">
    <citation type="journal article" date="2008" name="Protein Sci.">
        <title>Crystal structure of Mycobacterium tuberculosis LrpA, a leucine-responsive global regulator associated with starvation response.</title>
        <authorList>
            <person name="Reddy M.C."/>
            <person name="Gokulan K."/>
            <person name="Jacobs W.R."/>
            <person name="Ioerger T.R."/>
            <person name="Sacchettini J.C."/>
        </authorList>
    </citation>
    <scope>X-RAY CRYSTALLOGRAPHY (2.16 ANGSTROMS) OF 5-150 OF MUTANT MET-108</scope>
    <scope>FUNCTION</scope>
    <scope>DNA-BINDING</scope>
    <scope>ACTIVITY REGULATION</scope>
    <scope>SUBUNIT</scope>
    <scope>DOMAIN</scope>
    <source>
        <strain>H37Rv</strain>
    </source>
</reference>
<reference evidence="22 23 24" key="9">
    <citation type="journal article" date="2009" name="J. Mol. Biol.">
        <title>Ligand-induced structural transitions, mutational analysis, and 'open' quaternary structure of the M. tuberculosis feast/famine regulatory protein (Rv3291c).</title>
        <authorList>
            <person name="Shrivastava T."/>
            <person name="Dey A."/>
            <person name="Ramachandran R."/>
        </authorList>
    </citation>
    <scope>X-RAY CRYSTALLOGRAPHY (2.15 ANGSTROMS) OF WILD-TYPE IN COMPLEX WITH LYSINE AND MUTANTS THR-102 AND ALA-104</scope>
    <scope>ACTIVITY REGULATION</scope>
    <scope>SUBUNIT</scope>
    <scope>MUTAGENESIS OF GLY-102 AND GLU-104</scope>
</reference>
<keyword id="KW-0002">3D-structure</keyword>
<keyword id="KW-0238">DNA-binding</keyword>
<keyword id="KW-1185">Reference proteome</keyword>
<keyword id="KW-0804">Transcription</keyword>
<keyword id="KW-0805">Transcription regulation</keyword>
<evidence type="ECO:0000255" key="1">
    <source>
        <dbReference type="PROSITE-ProRule" id="PRU00319"/>
    </source>
</evidence>
<evidence type="ECO:0000269" key="2">
    <source>
    </source>
</evidence>
<evidence type="ECO:0000269" key="3">
    <source>
    </source>
</evidence>
<evidence type="ECO:0000269" key="4">
    <source>
    </source>
</evidence>
<evidence type="ECO:0000269" key="5">
    <source>
    </source>
</evidence>
<evidence type="ECO:0000269" key="6">
    <source>
    </source>
</evidence>
<evidence type="ECO:0000269" key="7">
    <source>
    </source>
</evidence>
<evidence type="ECO:0000269" key="8">
    <source>
    </source>
</evidence>
<evidence type="ECO:0000303" key="9">
    <source>
    </source>
</evidence>
<evidence type="ECO:0000303" key="10">
    <source>
    </source>
</evidence>
<evidence type="ECO:0000303" key="11">
    <source>
    </source>
</evidence>
<evidence type="ECO:0000305" key="12"/>
<evidence type="ECO:0000312" key="13">
    <source>
        <dbReference type="EMBL" id="CCP46110.1"/>
    </source>
</evidence>
<evidence type="ECO:0007744" key="14">
    <source>
        <dbReference type="PDB" id="2IVM"/>
    </source>
</evidence>
<evidence type="ECO:0007744" key="15">
    <source>
        <dbReference type="PDB" id="2QZ8"/>
    </source>
</evidence>
<evidence type="ECO:0007744" key="16">
    <source>
        <dbReference type="PDB" id="2VBW"/>
    </source>
</evidence>
<evidence type="ECO:0007744" key="17">
    <source>
        <dbReference type="PDB" id="2VBX"/>
    </source>
</evidence>
<evidence type="ECO:0007744" key="18">
    <source>
        <dbReference type="PDB" id="2VBY"/>
    </source>
</evidence>
<evidence type="ECO:0007744" key="19">
    <source>
        <dbReference type="PDB" id="2VBZ"/>
    </source>
</evidence>
<evidence type="ECO:0007744" key="20">
    <source>
        <dbReference type="PDB" id="2VC0"/>
    </source>
</evidence>
<evidence type="ECO:0007744" key="21">
    <source>
        <dbReference type="PDB" id="2VC1"/>
    </source>
</evidence>
<evidence type="ECO:0007744" key="22">
    <source>
        <dbReference type="PDB" id="2W24"/>
    </source>
</evidence>
<evidence type="ECO:0007744" key="23">
    <source>
        <dbReference type="PDB" id="2W25"/>
    </source>
</evidence>
<evidence type="ECO:0007744" key="24">
    <source>
        <dbReference type="PDB" id="2W29"/>
    </source>
</evidence>
<evidence type="ECO:0007829" key="25">
    <source>
        <dbReference type="PDB" id="2W25"/>
    </source>
</evidence>
<protein>
    <recommendedName>
        <fullName evidence="12">HTH-type transcriptional regulator LrpA</fullName>
    </recommendedName>
    <alternativeName>
        <fullName evidence="9">Feast/famine regulatory protein Rv3291c</fullName>
    </alternativeName>
    <alternativeName>
        <fullName evidence="9">MtbLrp</fullName>
    </alternativeName>
    <alternativeName>
        <fullName evidence="11">MtbLrpA</fullName>
    </alternativeName>
</protein>
<organism>
    <name type="scientific">Mycobacterium tuberculosis (strain ATCC 25618 / H37Rv)</name>
    <dbReference type="NCBI Taxonomy" id="83332"/>
    <lineage>
        <taxon>Bacteria</taxon>
        <taxon>Bacillati</taxon>
        <taxon>Actinomycetota</taxon>
        <taxon>Actinomycetes</taxon>
        <taxon>Mycobacteriales</taxon>
        <taxon>Mycobacteriaceae</taxon>
        <taxon>Mycobacterium</taxon>
        <taxon>Mycobacterium tuberculosis complex</taxon>
    </lineage>
</organism>
<gene>
    <name evidence="10" type="primary">lrpA</name>
    <name evidence="13" type="ordered locus">Rv3291c</name>
</gene>
<comment type="function">
    <text evidence="5 6 8">Transcriptional regulator that probably plays an important role in M.tuberculosis persistence (PubMed:18042675, PubMed:18930129, PubMed:26789099). Regulates the expression of several genes, including lat, rsmG, whiB2, lsr2 and Rv2011c (PubMed:18042675, PubMed:26789099). Acts by binding directly to the promoter region of the target genes (PubMed:18042675, PubMed:26789099).</text>
</comment>
<comment type="activity regulation">
    <text evidence="4 5 7 8">The DNA-binding activity of LrpA is modulated by interaction of LrpA with various effector molecules, including amino acids and vitamins (PubMed:17962306, PubMed:18042675, PubMed:19651141, PubMed:26789099). The DNA binding affinity is decreased by several amino acids, including phenylalanine, tyrosine, tryptophan, histidine, leucine and aspartate (PubMed:17962306, PubMed:18042675, PubMed:19651141, PubMed:26789099). Preferentially binds to aromatic amino acids (PubMed:17962306, PubMed:26789099). Besides amino acids, the binding affinity is also reduced by vitamins, including B1, B3, B6, VC, B7, B9, B12, VA and VK3 (PubMed:26789099).</text>
</comment>
<comment type="subunit">
    <text evidence="3 4 5 7">Homohexadecamer in the absence of any added ligand (PubMed:19651141). Homooctamer (PubMed:15388937, PubMed:17962306, PubMed:18042675, PubMed:19651141). Tetramer of dimers (PubMed:17962306, PubMed:18042675, PubMed:19651141). In the presence of phenylalanine, the hexadecamer dissociates into an octamer, which further dissociates partially into lower-order oligomers (PubMed:19651141).</text>
</comment>
<comment type="induction">
    <text evidence="2">15-fold induced by starvation.</text>
</comment>
<comment type="domain">
    <text evidence="4 5">Contains an N-terminal DNA-binding domain, followed by a rather long linker and a C-terminal effector-binding domain, which is also involved in oligomeric interactions (PubMed:17962306, PubMed:18042675). The ligand-binding loops of two crystallographically independent subunits adopt different conformations to generate two distinct effector-binding sites (PubMed:17962306). Amino acids like phenylalanine, tyrosine and tryptophan exhibit binding to only one site, histidine exhibits binding to both sites (PubMed:17962306).</text>
</comment>
<comment type="mass spectrometry">
    <text>Reported mass includes mass of a C-terminal His6 tag.</text>
</comment>
<comment type="miscellaneous">
    <text evidence="6">Can complement a M.fortuitum lrpA mutant, which is attenuated in virulence and persistence in a murine infection model.</text>
</comment>
<accession>I6YBQ3</accession>